<protein>
    <recommendedName>
        <fullName evidence="1">Phosphomethylpyrimidine synthase</fullName>
        <ecNumber evidence="1">4.1.99.17</ecNumber>
    </recommendedName>
    <alternativeName>
        <fullName evidence="1">Hydroxymethylpyrimidine phosphate synthase</fullName>
        <shortName evidence="1">HMP-P synthase</shortName>
        <shortName evidence="1">HMP-phosphate synthase</shortName>
        <shortName evidence="1">HMPP synthase</shortName>
    </alternativeName>
    <alternativeName>
        <fullName evidence="1">Thiamine biosynthesis protein ThiC</fullName>
    </alternativeName>
</protein>
<name>THIC_FRACC</name>
<sequence>MVSRTDRSSSSTSKAVTSSPSTSSLSSAASSPSVSSSSSSSSVSAAGMTAVSTGPLTGSRKTWLVGADPDLRVPMREIVLTTGDTVVVYDTSGPYTDPGVTIDVRRGLPATRDSWIAQRGDTAPDERRTVPGTGASGPGTLGSGTPGSGTPGSGPLGLGGTDLDGRVRVPRRAVPGRPSITQLGYARRGQITREMEFVALREGLPVETVRAEIAAGRAVLPANVNHPESEPMAIGRAFLVKINANLGNSAVTSSIEEEVEKMVWATRWGADTVMDLSTGSDIALTREWIIRNAPVPVGTVPIYQALEKVGGRPEKLSWEVYRDTVIEQCEQGVDYMTVHAGVLLRYVPLTARRRTGIVSRGGSILASWCLAHHEENFLYTHFAELCEIFAAYDVTFSLGDGLRPGSIADANDEAQLAELATLGELTQVAWEHDVQVMIEGPGHVPMNKIEENVQLQRELCHDAPFYTLGPLTTDIAPGYDHITSAIGAAMIGWAGTAMLCYVTPKEHLGLPDRDDVKAGVIAYKIAAHAADLAKGHPGAQAWDDALSDARFEFRWADQFHLALDPDTARAFHDETLPAPAAKSAHFCSMCGPHFCSMKISHQVRAHAGGDGLDPAGHGADPAGDEAVTAGLREKAAEFNAAGNRIYLPVANS</sequence>
<evidence type="ECO:0000255" key="1">
    <source>
        <dbReference type="HAMAP-Rule" id="MF_00089"/>
    </source>
</evidence>
<evidence type="ECO:0000256" key="2">
    <source>
        <dbReference type="SAM" id="MobiDB-lite"/>
    </source>
</evidence>
<keyword id="KW-0004">4Fe-4S</keyword>
<keyword id="KW-0408">Iron</keyword>
<keyword id="KW-0411">Iron-sulfur</keyword>
<keyword id="KW-0456">Lyase</keyword>
<keyword id="KW-0479">Metal-binding</keyword>
<keyword id="KW-1185">Reference proteome</keyword>
<keyword id="KW-0949">S-adenosyl-L-methionine</keyword>
<keyword id="KW-0784">Thiamine biosynthesis</keyword>
<keyword id="KW-0862">Zinc</keyword>
<organism>
    <name type="scientific">Frankia casuarinae (strain DSM 45818 / CECT 9043 / HFP020203 / CcI3)</name>
    <dbReference type="NCBI Taxonomy" id="106370"/>
    <lineage>
        <taxon>Bacteria</taxon>
        <taxon>Bacillati</taxon>
        <taxon>Actinomycetota</taxon>
        <taxon>Actinomycetes</taxon>
        <taxon>Frankiales</taxon>
        <taxon>Frankiaceae</taxon>
        <taxon>Frankia</taxon>
    </lineage>
</organism>
<dbReference type="EC" id="4.1.99.17" evidence="1"/>
<dbReference type="EMBL" id="CP000249">
    <property type="protein sequence ID" value="ABD09770.1"/>
    <property type="molecule type" value="Genomic_DNA"/>
</dbReference>
<dbReference type="SMR" id="Q2JG22"/>
<dbReference type="STRING" id="106370.Francci3_0383"/>
<dbReference type="KEGG" id="fra:Francci3_0383"/>
<dbReference type="eggNOG" id="COG0422">
    <property type="taxonomic scope" value="Bacteria"/>
</dbReference>
<dbReference type="HOGENOM" id="CLU_013181_2_1_11"/>
<dbReference type="PhylomeDB" id="Q2JG22"/>
<dbReference type="UniPathway" id="UPA00060"/>
<dbReference type="Proteomes" id="UP000001937">
    <property type="component" value="Chromosome"/>
</dbReference>
<dbReference type="GO" id="GO:0005829">
    <property type="term" value="C:cytosol"/>
    <property type="evidence" value="ECO:0007669"/>
    <property type="project" value="TreeGrafter"/>
</dbReference>
<dbReference type="GO" id="GO:0051539">
    <property type="term" value="F:4 iron, 4 sulfur cluster binding"/>
    <property type="evidence" value="ECO:0007669"/>
    <property type="project" value="UniProtKB-KW"/>
</dbReference>
<dbReference type="GO" id="GO:0016830">
    <property type="term" value="F:carbon-carbon lyase activity"/>
    <property type="evidence" value="ECO:0007669"/>
    <property type="project" value="InterPro"/>
</dbReference>
<dbReference type="GO" id="GO:0008270">
    <property type="term" value="F:zinc ion binding"/>
    <property type="evidence" value="ECO:0007669"/>
    <property type="project" value="UniProtKB-UniRule"/>
</dbReference>
<dbReference type="GO" id="GO:0009228">
    <property type="term" value="P:thiamine biosynthetic process"/>
    <property type="evidence" value="ECO:0007669"/>
    <property type="project" value="UniProtKB-KW"/>
</dbReference>
<dbReference type="GO" id="GO:0009229">
    <property type="term" value="P:thiamine diphosphate biosynthetic process"/>
    <property type="evidence" value="ECO:0007669"/>
    <property type="project" value="UniProtKB-UniRule"/>
</dbReference>
<dbReference type="FunFam" id="3.20.20.540:FF:000001">
    <property type="entry name" value="Phosphomethylpyrimidine synthase"/>
    <property type="match status" value="1"/>
</dbReference>
<dbReference type="Gene3D" id="6.10.250.620">
    <property type="match status" value="1"/>
</dbReference>
<dbReference type="Gene3D" id="3.20.20.540">
    <property type="entry name" value="Radical SAM ThiC family, central domain"/>
    <property type="match status" value="1"/>
</dbReference>
<dbReference type="HAMAP" id="MF_00089">
    <property type="entry name" value="ThiC"/>
    <property type="match status" value="1"/>
</dbReference>
<dbReference type="InterPro" id="IPR037509">
    <property type="entry name" value="ThiC"/>
</dbReference>
<dbReference type="InterPro" id="IPR025747">
    <property type="entry name" value="ThiC-associated_dom"/>
</dbReference>
<dbReference type="InterPro" id="IPR038521">
    <property type="entry name" value="ThiC/Bza_core_dom"/>
</dbReference>
<dbReference type="InterPro" id="IPR002817">
    <property type="entry name" value="ThiC/BzaA/B"/>
</dbReference>
<dbReference type="NCBIfam" id="NF006763">
    <property type="entry name" value="PRK09284.1"/>
    <property type="match status" value="1"/>
</dbReference>
<dbReference type="NCBIfam" id="NF009895">
    <property type="entry name" value="PRK13352.1"/>
    <property type="match status" value="1"/>
</dbReference>
<dbReference type="NCBIfam" id="TIGR00190">
    <property type="entry name" value="thiC"/>
    <property type="match status" value="1"/>
</dbReference>
<dbReference type="PANTHER" id="PTHR30557:SF1">
    <property type="entry name" value="PHOSPHOMETHYLPYRIMIDINE SYNTHASE, CHLOROPLASTIC"/>
    <property type="match status" value="1"/>
</dbReference>
<dbReference type="PANTHER" id="PTHR30557">
    <property type="entry name" value="THIAMINE BIOSYNTHESIS PROTEIN THIC"/>
    <property type="match status" value="1"/>
</dbReference>
<dbReference type="Pfam" id="PF13667">
    <property type="entry name" value="ThiC-associated"/>
    <property type="match status" value="1"/>
</dbReference>
<dbReference type="Pfam" id="PF01964">
    <property type="entry name" value="ThiC_Rad_SAM"/>
    <property type="match status" value="1"/>
</dbReference>
<dbReference type="SFLD" id="SFLDF00407">
    <property type="entry name" value="phosphomethylpyrimidine_syntha"/>
    <property type="match status" value="1"/>
</dbReference>
<dbReference type="SFLD" id="SFLDG01114">
    <property type="entry name" value="phosphomethylpyrimidine_syntha"/>
    <property type="match status" value="1"/>
</dbReference>
<dbReference type="SFLD" id="SFLDS00113">
    <property type="entry name" value="Radical_SAM_Phosphomethylpyrim"/>
    <property type="match status" value="1"/>
</dbReference>
<feature type="chain" id="PRO_0000242263" description="Phosphomethylpyrimidine synthase">
    <location>
        <begin position="1"/>
        <end position="652"/>
    </location>
</feature>
<feature type="region of interest" description="Disordered" evidence="2">
    <location>
        <begin position="1"/>
        <end position="45"/>
    </location>
</feature>
<feature type="region of interest" description="Disordered" evidence="2">
    <location>
        <begin position="118"/>
        <end position="166"/>
    </location>
</feature>
<feature type="compositionally biased region" description="Low complexity" evidence="2">
    <location>
        <begin position="8"/>
        <end position="45"/>
    </location>
</feature>
<feature type="compositionally biased region" description="Gly residues" evidence="2">
    <location>
        <begin position="134"/>
        <end position="162"/>
    </location>
</feature>
<feature type="binding site" evidence="1">
    <location>
        <position position="245"/>
    </location>
    <ligand>
        <name>substrate</name>
    </ligand>
</feature>
<feature type="binding site" evidence="1">
    <location>
        <position position="274"/>
    </location>
    <ligand>
        <name>substrate</name>
    </ligand>
</feature>
<feature type="binding site" evidence="1">
    <location>
        <position position="303"/>
    </location>
    <ligand>
        <name>substrate</name>
    </ligand>
</feature>
<feature type="binding site" evidence="1">
    <location>
        <position position="339"/>
    </location>
    <ligand>
        <name>substrate</name>
    </ligand>
</feature>
<feature type="binding site" evidence="1">
    <location>
        <begin position="359"/>
        <end position="361"/>
    </location>
    <ligand>
        <name>substrate</name>
    </ligand>
</feature>
<feature type="binding site" evidence="1">
    <location>
        <begin position="400"/>
        <end position="403"/>
    </location>
    <ligand>
        <name>substrate</name>
    </ligand>
</feature>
<feature type="binding site" evidence="1">
    <location>
        <position position="439"/>
    </location>
    <ligand>
        <name>substrate</name>
    </ligand>
</feature>
<feature type="binding site" evidence="1">
    <location>
        <position position="443"/>
    </location>
    <ligand>
        <name>Zn(2+)</name>
        <dbReference type="ChEBI" id="CHEBI:29105"/>
    </ligand>
</feature>
<feature type="binding site" evidence="1">
    <location>
        <position position="466"/>
    </location>
    <ligand>
        <name>substrate</name>
    </ligand>
</feature>
<feature type="binding site" evidence="1">
    <location>
        <position position="507"/>
    </location>
    <ligand>
        <name>Zn(2+)</name>
        <dbReference type="ChEBI" id="CHEBI:29105"/>
    </ligand>
</feature>
<feature type="binding site" evidence="1">
    <location>
        <position position="587"/>
    </location>
    <ligand>
        <name>[4Fe-4S] cluster</name>
        <dbReference type="ChEBI" id="CHEBI:49883"/>
        <note>4Fe-4S-S-AdoMet</note>
    </ligand>
</feature>
<feature type="binding site" evidence="1">
    <location>
        <position position="590"/>
    </location>
    <ligand>
        <name>[4Fe-4S] cluster</name>
        <dbReference type="ChEBI" id="CHEBI:49883"/>
        <note>4Fe-4S-S-AdoMet</note>
    </ligand>
</feature>
<feature type="binding site" evidence="1">
    <location>
        <position position="595"/>
    </location>
    <ligand>
        <name>[4Fe-4S] cluster</name>
        <dbReference type="ChEBI" id="CHEBI:49883"/>
        <note>4Fe-4S-S-AdoMet</note>
    </ligand>
</feature>
<gene>
    <name evidence="1" type="primary">thiC</name>
    <name type="ordered locus">Francci3_0383</name>
</gene>
<proteinExistence type="inferred from homology"/>
<accession>Q2JG22</accession>
<reference key="1">
    <citation type="journal article" date="2007" name="Genome Res.">
        <title>Genome characteristics of facultatively symbiotic Frankia sp. strains reflect host range and host plant biogeography.</title>
        <authorList>
            <person name="Normand P."/>
            <person name="Lapierre P."/>
            <person name="Tisa L.S."/>
            <person name="Gogarten J.P."/>
            <person name="Alloisio N."/>
            <person name="Bagnarol E."/>
            <person name="Bassi C.A."/>
            <person name="Berry A.M."/>
            <person name="Bickhart D.M."/>
            <person name="Choisne N."/>
            <person name="Couloux A."/>
            <person name="Cournoyer B."/>
            <person name="Cruveiller S."/>
            <person name="Daubin V."/>
            <person name="Demange N."/>
            <person name="Francino M.P."/>
            <person name="Goltsman E."/>
            <person name="Huang Y."/>
            <person name="Kopp O.R."/>
            <person name="Labarre L."/>
            <person name="Lapidus A."/>
            <person name="Lavire C."/>
            <person name="Marechal J."/>
            <person name="Martinez M."/>
            <person name="Mastronunzio J.E."/>
            <person name="Mullin B.C."/>
            <person name="Niemann J."/>
            <person name="Pujic P."/>
            <person name="Rawnsley T."/>
            <person name="Rouy Z."/>
            <person name="Schenowitz C."/>
            <person name="Sellstedt A."/>
            <person name="Tavares F."/>
            <person name="Tomkins J.P."/>
            <person name="Vallenet D."/>
            <person name="Valverde C."/>
            <person name="Wall L.G."/>
            <person name="Wang Y."/>
            <person name="Medigue C."/>
            <person name="Benson D.R."/>
        </authorList>
    </citation>
    <scope>NUCLEOTIDE SEQUENCE [LARGE SCALE GENOMIC DNA]</scope>
    <source>
        <strain>DSM 45818 / CECT 9043 / HFP020203 / CcI3</strain>
    </source>
</reference>
<comment type="function">
    <text evidence="1">Catalyzes the synthesis of the hydroxymethylpyrimidine phosphate (HMP-P) moiety of thiamine from aminoimidazole ribotide (AIR) in a radical S-adenosyl-L-methionine (SAM)-dependent reaction.</text>
</comment>
<comment type="catalytic activity">
    <reaction evidence="1">
        <text>5-amino-1-(5-phospho-beta-D-ribosyl)imidazole + S-adenosyl-L-methionine = 4-amino-2-methyl-5-(phosphooxymethyl)pyrimidine + CO + 5'-deoxyadenosine + formate + L-methionine + 3 H(+)</text>
        <dbReference type="Rhea" id="RHEA:24840"/>
        <dbReference type="ChEBI" id="CHEBI:15378"/>
        <dbReference type="ChEBI" id="CHEBI:15740"/>
        <dbReference type="ChEBI" id="CHEBI:17245"/>
        <dbReference type="ChEBI" id="CHEBI:17319"/>
        <dbReference type="ChEBI" id="CHEBI:57844"/>
        <dbReference type="ChEBI" id="CHEBI:58354"/>
        <dbReference type="ChEBI" id="CHEBI:59789"/>
        <dbReference type="ChEBI" id="CHEBI:137981"/>
        <dbReference type="EC" id="4.1.99.17"/>
    </reaction>
</comment>
<comment type="cofactor">
    <cofactor evidence="1">
        <name>[4Fe-4S] cluster</name>
        <dbReference type="ChEBI" id="CHEBI:49883"/>
    </cofactor>
    <text evidence="1">Binds 1 [4Fe-4S] cluster per subunit. The cluster is coordinated with 3 cysteines and an exchangeable S-adenosyl-L-methionine.</text>
</comment>
<comment type="pathway">
    <text evidence="1">Cofactor biosynthesis; thiamine diphosphate biosynthesis.</text>
</comment>
<comment type="similarity">
    <text evidence="1">Belongs to the ThiC family.</text>
</comment>